<proteinExistence type="inferred from homology"/>
<reference key="1">
    <citation type="submission" date="2008-06" db="EMBL/GenBank/DDBJ databases">
        <title>Lactobacillus casei BL23 complete genome sequence.</title>
        <authorList>
            <person name="Maze A."/>
            <person name="Boel G."/>
            <person name="Bourand A."/>
            <person name="Loux V."/>
            <person name="Gibrat J.F."/>
            <person name="Zuniga M."/>
            <person name="Hartke A."/>
            <person name="Deutscher J."/>
        </authorList>
    </citation>
    <scope>NUCLEOTIDE SEQUENCE [LARGE SCALE GENOMIC DNA]</scope>
    <source>
        <strain>BL23</strain>
    </source>
</reference>
<sequence length="484" mass="51369">MDYFKTSIDQLHEQLRSGKVTSSQLVDETLAGINQLDAEVDAFLALNADGAKEKAAAVDAAGIADDQPLAGVPIAIKDNIVTKGVVTTAASKMLANFNPIYDATVMQKLDAAGAINVGKTNMDEFAMGSSTENSAFKTTKNAWDHTRVPGGSSGGSAAAVAAGEVIAALGSDTGGSIRQPAAFNGIVGVKPTYGRVSRWGLIAFSSSLDQIGTLTRHVKDAAQLLNVIAGHDERDSTTADTPVPDFTAKIGQDIKGMKIALPKEYLGKGVDPAVADKIKAAAKQFEDMGATVTEVSLPHTQYAVPSYYIIASSEASSNLQRFDGIRYGFRAKDVKNIEDVYVRSRSEGFGPEVKRRIMLGTFSLSAGFYDAYFKKAGQVRTLITRDFEDVFKDYDLIIGPTTPTVAFKIGEKVTDPVTMYMNDILTIPVNLAGLPAASVPAGFVDGMPVGLQLIGKHFDESTIFQVAAAFEAQNDYLAQIPGGK</sequence>
<keyword id="KW-0067">ATP-binding</keyword>
<keyword id="KW-0436">Ligase</keyword>
<keyword id="KW-0547">Nucleotide-binding</keyword>
<keyword id="KW-0648">Protein biosynthesis</keyword>
<organism>
    <name type="scientific">Lacticaseibacillus casei (strain BL23)</name>
    <name type="common">Lactobacillus casei</name>
    <dbReference type="NCBI Taxonomy" id="543734"/>
    <lineage>
        <taxon>Bacteria</taxon>
        <taxon>Bacillati</taxon>
        <taxon>Bacillota</taxon>
        <taxon>Bacilli</taxon>
        <taxon>Lactobacillales</taxon>
        <taxon>Lactobacillaceae</taxon>
        <taxon>Lacticaseibacillus</taxon>
    </lineage>
</organism>
<evidence type="ECO:0000255" key="1">
    <source>
        <dbReference type="HAMAP-Rule" id="MF_00120"/>
    </source>
</evidence>
<dbReference type="EC" id="6.3.5.7" evidence="1"/>
<dbReference type="EMBL" id="FM177140">
    <property type="protein sequence ID" value="CAQ66308.1"/>
    <property type="molecule type" value="Genomic_DNA"/>
</dbReference>
<dbReference type="SMR" id="B3WD57"/>
<dbReference type="KEGG" id="lcb:LCABL_12230"/>
<dbReference type="HOGENOM" id="CLU_009600_0_3_9"/>
<dbReference type="GO" id="GO:0030956">
    <property type="term" value="C:glutamyl-tRNA(Gln) amidotransferase complex"/>
    <property type="evidence" value="ECO:0007669"/>
    <property type="project" value="InterPro"/>
</dbReference>
<dbReference type="GO" id="GO:0005524">
    <property type="term" value="F:ATP binding"/>
    <property type="evidence" value="ECO:0007669"/>
    <property type="project" value="UniProtKB-KW"/>
</dbReference>
<dbReference type="GO" id="GO:0050567">
    <property type="term" value="F:glutaminyl-tRNA synthase (glutamine-hydrolyzing) activity"/>
    <property type="evidence" value="ECO:0007669"/>
    <property type="project" value="UniProtKB-UniRule"/>
</dbReference>
<dbReference type="GO" id="GO:0006412">
    <property type="term" value="P:translation"/>
    <property type="evidence" value="ECO:0007669"/>
    <property type="project" value="UniProtKB-UniRule"/>
</dbReference>
<dbReference type="Gene3D" id="3.90.1300.10">
    <property type="entry name" value="Amidase signature (AS) domain"/>
    <property type="match status" value="1"/>
</dbReference>
<dbReference type="HAMAP" id="MF_00120">
    <property type="entry name" value="GatA"/>
    <property type="match status" value="1"/>
</dbReference>
<dbReference type="InterPro" id="IPR000120">
    <property type="entry name" value="Amidase"/>
</dbReference>
<dbReference type="InterPro" id="IPR020556">
    <property type="entry name" value="Amidase_CS"/>
</dbReference>
<dbReference type="InterPro" id="IPR023631">
    <property type="entry name" value="Amidase_dom"/>
</dbReference>
<dbReference type="InterPro" id="IPR036928">
    <property type="entry name" value="AS_sf"/>
</dbReference>
<dbReference type="InterPro" id="IPR004412">
    <property type="entry name" value="GatA"/>
</dbReference>
<dbReference type="NCBIfam" id="TIGR00132">
    <property type="entry name" value="gatA"/>
    <property type="match status" value="1"/>
</dbReference>
<dbReference type="PANTHER" id="PTHR11895:SF151">
    <property type="entry name" value="GLUTAMYL-TRNA(GLN) AMIDOTRANSFERASE SUBUNIT A"/>
    <property type="match status" value="1"/>
</dbReference>
<dbReference type="PANTHER" id="PTHR11895">
    <property type="entry name" value="TRANSAMIDASE"/>
    <property type="match status" value="1"/>
</dbReference>
<dbReference type="Pfam" id="PF01425">
    <property type="entry name" value="Amidase"/>
    <property type="match status" value="1"/>
</dbReference>
<dbReference type="SUPFAM" id="SSF75304">
    <property type="entry name" value="Amidase signature (AS) enzymes"/>
    <property type="match status" value="1"/>
</dbReference>
<dbReference type="PROSITE" id="PS00571">
    <property type="entry name" value="AMIDASES"/>
    <property type="match status" value="1"/>
</dbReference>
<protein>
    <recommendedName>
        <fullName evidence="1">Glutamyl-tRNA(Gln) amidotransferase subunit A</fullName>
        <shortName evidence="1">Glu-ADT subunit A</shortName>
        <ecNumber evidence="1">6.3.5.7</ecNumber>
    </recommendedName>
</protein>
<gene>
    <name evidence="1" type="primary">gatA</name>
    <name type="ordered locus">LCABL_12230</name>
</gene>
<name>GATA_LACCB</name>
<comment type="function">
    <text evidence="1">Allows the formation of correctly charged Gln-tRNA(Gln) through the transamidation of misacylated Glu-tRNA(Gln) in organisms which lack glutaminyl-tRNA synthetase. The reaction takes place in the presence of glutamine and ATP through an activated gamma-phospho-Glu-tRNA(Gln).</text>
</comment>
<comment type="catalytic activity">
    <reaction evidence="1">
        <text>L-glutamyl-tRNA(Gln) + L-glutamine + ATP + H2O = L-glutaminyl-tRNA(Gln) + L-glutamate + ADP + phosphate + H(+)</text>
        <dbReference type="Rhea" id="RHEA:17521"/>
        <dbReference type="Rhea" id="RHEA-COMP:9681"/>
        <dbReference type="Rhea" id="RHEA-COMP:9684"/>
        <dbReference type="ChEBI" id="CHEBI:15377"/>
        <dbReference type="ChEBI" id="CHEBI:15378"/>
        <dbReference type="ChEBI" id="CHEBI:29985"/>
        <dbReference type="ChEBI" id="CHEBI:30616"/>
        <dbReference type="ChEBI" id="CHEBI:43474"/>
        <dbReference type="ChEBI" id="CHEBI:58359"/>
        <dbReference type="ChEBI" id="CHEBI:78520"/>
        <dbReference type="ChEBI" id="CHEBI:78521"/>
        <dbReference type="ChEBI" id="CHEBI:456216"/>
        <dbReference type="EC" id="6.3.5.7"/>
    </reaction>
</comment>
<comment type="subunit">
    <text evidence="1">Heterotrimer of A, B and C subunits.</text>
</comment>
<comment type="similarity">
    <text evidence="1">Belongs to the amidase family. GatA subfamily.</text>
</comment>
<feature type="chain" id="PRO_1000095141" description="Glutamyl-tRNA(Gln) amidotransferase subunit A">
    <location>
        <begin position="1"/>
        <end position="484"/>
    </location>
</feature>
<feature type="active site" description="Charge relay system" evidence="1">
    <location>
        <position position="77"/>
    </location>
</feature>
<feature type="active site" description="Charge relay system" evidence="1">
    <location>
        <position position="152"/>
    </location>
</feature>
<feature type="active site" description="Acyl-ester intermediate" evidence="1">
    <location>
        <position position="176"/>
    </location>
</feature>
<accession>B3WD57</accession>